<sequence length="433" mass="48025">MAQFYSAKRRTTTRQIITVSVNDLDSFGQGVARHNGKTLFIPGLLPQENAEVTVTEDKKQYARAKVVRRLSDSPERETPRCPHFGVCGGCQQQHASVDLQQRSKSAALARLMKHEVSEVIADVPWGYRRRARLSLNYLPKTQQLQMGFRKAGSSDIVDVKQCPILVPQLEALLPKVRACLGSLQAMRHLGHVELVQATSGTLMILRHTAPLSSADREKLERFSHSEGLDLYLAPDSEILETVSGEMPWYDSNGLRLTFSPRDFIQVNAGVNQKMVASALEWLDVQPEDRVLDLFCGMGNFTLPLATQAASVVGVEGVPALVEKGQQNARLNGLQNVTFYHENLEEDVTKQPWAKNGFDKVLLDPARAGAAGVMQQIIKLEPIRIVYVSCNPATLARDSEALLKAGYTIARLAMLDMFPHTGHLESMVLFSRVK</sequence>
<comment type="function">
    <text evidence="2">Catalyzes the formation of 5-methyl-uridine at position 1939 (m5U1939) in 23S rRNA.</text>
</comment>
<comment type="catalytic activity">
    <reaction evidence="2">
        <text>uridine(1939) in 23S rRNA + S-adenosyl-L-methionine = 5-methyluridine(1939) in 23S rRNA + S-adenosyl-L-homocysteine + H(+)</text>
        <dbReference type="Rhea" id="RHEA:42908"/>
        <dbReference type="Rhea" id="RHEA-COMP:10278"/>
        <dbReference type="Rhea" id="RHEA-COMP:10279"/>
        <dbReference type="ChEBI" id="CHEBI:15378"/>
        <dbReference type="ChEBI" id="CHEBI:57856"/>
        <dbReference type="ChEBI" id="CHEBI:59789"/>
        <dbReference type="ChEBI" id="CHEBI:65315"/>
        <dbReference type="ChEBI" id="CHEBI:74447"/>
        <dbReference type="EC" id="2.1.1.190"/>
    </reaction>
</comment>
<comment type="similarity">
    <text evidence="2">Belongs to the class I-like SAM-binding methyltransferase superfamily. RNA M5U methyltransferase family. RlmD subfamily.</text>
</comment>
<reference key="1">
    <citation type="journal article" date="2005" name="Nucleic Acids Res.">
        <title>Genome dynamics and diversity of Shigella species, the etiologic agents of bacillary dysentery.</title>
        <authorList>
            <person name="Yang F."/>
            <person name="Yang J."/>
            <person name="Zhang X."/>
            <person name="Chen L."/>
            <person name="Jiang Y."/>
            <person name="Yan Y."/>
            <person name="Tang X."/>
            <person name="Wang J."/>
            <person name="Xiong Z."/>
            <person name="Dong J."/>
            <person name="Xue Y."/>
            <person name="Zhu Y."/>
            <person name="Xu X."/>
            <person name="Sun L."/>
            <person name="Chen S."/>
            <person name="Nie H."/>
            <person name="Peng J."/>
            <person name="Xu J."/>
            <person name="Wang Y."/>
            <person name="Yuan Z."/>
            <person name="Wen Y."/>
            <person name="Yao Z."/>
            <person name="Shen Y."/>
            <person name="Qiang B."/>
            <person name="Hou Y."/>
            <person name="Yu J."/>
            <person name="Jin Q."/>
        </authorList>
    </citation>
    <scope>NUCLEOTIDE SEQUENCE [LARGE SCALE GENOMIC DNA]</scope>
    <source>
        <strain>Sb227</strain>
    </source>
</reference>
<keyword id="KW-0004">4Fe-4S</keyword>
<keyword id="KW-0408">Iron</keyword>
<keyword id="KW-0411">Iron-sulfur</keyword>
<keyword id="KW-0479">Metal-binding</keyword>
<keyword id="KW-0489">Methyltransferase</keyword>
<keyword id="KW-0698">rRNA processing</keyword>
<keyword id="KW-0949">S-adenosyl-L-methionine</keyword>
<keyword id="KW-0808">Transferase</keyword>
<dbReference type="EC" id="2.1.1.190" evidence="2"/>
<dbReference type="EMBL" id="CP000036">
    <property type="protein sequence ID" value="ABB67203.1"/>
    <property type="molecule type" value="Genomic_DNA"/>
</dbReference>
<dbReference type="RefSeq" id="WP_000046825.1">
    <property type="nucleotide sequence ID" value="NC_007613.1"/>
</dbReference>
<dbReference type="SMR" id="Q31XK5"/>
<dbReference type="KEGG" id="sbo:SBO_2666"/>
<dbReference type="HOGENOM" id="CLU_014689_8_2_6"/>
<dbReference type="Proteomes" id="UP000007067">
    <property type="component" value="Chromosome"/>
</dbReference>
<dbReference type="GO" id="GO:0051539">
    <property type="term" value="F:4 iron, 4 sulfur cluster binding"/>
    <property type="evidence" value="ECO:0007669"/>
    <property type="project" value="UniProtKB-KW"/>
</dbReference>
<dbReference type="GO" id="GO:0005506">
    <property type="term" value="F:iron ion binding"/>
    <property type="evidence" value="ECO:0007669"/>
    <property type="project" value="UniProtKB-UniRule"/>
</dbReference>
<dbReference type="GO" id="GO:0003723">
    <property type="term" value="F:RNA binding"/>
    <property type="evidence" value="ECO:0007669"/>
    <property type="project" value="InterPro"/>
</dbReference>
<dbReference type="GO" id="GO:0070041">
    <property type="term" value="F:rRNA (uridine-C5-)-methyltransferase activity"/>
    <property type="evidence" value="ECO:0007669"/>
    <property type="project" value="UniProtKB-UniRule"/>
</dbReference>
<dbReference type="GO" id="GO:0070475">
    <property type="term" value="P:rRNA base methylation"/>
    <property type="evidence" value="ECO:0007669"/>
    <property type="project" value="TreeGrafter"/>
</dbReference>
<dbReference type="CDD" id="cd02440">
    <property type="entry name" value="AdoMet_MTases"/>
    <property type="match status" value="1"/>
</dbReference>
<dbReference type="FunFam" id="3.40.50.150:FF:000009">
    <property type="entry name" value="23S rRNA (Uracil(1939)-C(5))-methyltransferase RlmD"/>
    <property type="match status" value="1"/>
</dbReference>
<dbReference type="FunFam" id="2.40.50.1070:FF:000004">
    <property type="entry name" value="23S rRNA (uracil(1939)-C(5))-methyltransferase RlmD"/>
    <property type="match status" value="1"/>
</dbReference>
<dbReference type="FunFam" id="2.40.50.140:FF:000097">
    <property type="entry name" value="23S rRNA (uracil(1939)-C(5))-methyltransferase RlmD"/>
    <property type="match status" value="1"/>
</dbReference>
<dbReference type="Gene3D" id="2.40.50.1070">
    <property type="match status" value="1"/>
</dbReference>
<dbReference type="Gene3D" id="2.40.50.140">
    <property type="entry name" value="Nucleic acid-binding proteins"/>
    <property type="match status" value="1"/>
</dbReference>
<dbReference type="Gene3D" id="3.40.50.150">
    <property type="entry name" value="Vaccinia Virus protein VP39"/>
    <property type="match status" value="1"/>
</dbReference>
<dbReference type="HAMAP" id="MF_01010">
    <property type="entry name" value="23SrRNA_methyltr_RlmD"/>
    <property type="match status" value="1"/>
</dbReference>
<dbReference type="InterPro" id="IPR001566">
    <property type="entry name" value="23S_rRNA_MeTrfase_RlmD"/>
</dbReference>
<dbReference type="InterPro" id="IPR030390">
    <property type="entry name" value="MeTrfase_TrmA_AS"/>
</dbReference>
<dbReference type="InterPro" id="IPR030391">
    <property type="entry name" value="MeTrfase_TrmA_CS"/>
</dbReference>
<dbReference type="InterPro" id="IPR012340">
    <property type="entry name" value="NA-bd_OB-fold"/>
</dbReference>
<dbReference type="InterPro" id="IPR029063">
    <property type="entry name" value="SAM-dependent_MTases_sf"/>
</dbReference>
<dbReference type="InterPro" id="IPR002792">
    <property type="entry name" value="TRAM_dom"/>
</dbReference>
<dbReference type="InterPro" id="IPR010280">
    <property type="entry name" value="U5_MeTrfase_fam"/>
</dbReference>
<dbReference type="NCBIfam" id="NF009639">
    <property type="entry name" value="PRK13168.1"/>
    <property type="match status" value="1"/>
</dbReference>
<dbReference type="NCBIfam" id="TIGR00479">
    <property type="entry name" value="rumA"/>
    <property type="match status" value="1"/>
</dbReference>
<dbReference type="PANTHER" id="PTHR11061:SF49">
    <property type="entry name" value="23S RRNA (URACIL(1939)-C(5))-METHYLTRANSFERASE RLMD"/>
    <property type="match status" value="1"/>
</dbReference>
<dbReference type="PANTHER" id="PTHR11061">
    <property type="entry name" value="RNA M5U METHYLTRANSFERASE"/>
    <property type="match status" value="1"/>
</dbReference>
<dbReference type="Pfam" id="PF01938">
    <property type="entry name" value="TRAM"/>
    <property type="match status" value="1"/>
</dbReference>
<dbReference type="Pfam" id="PF05958">
    <property type="entry name" value="tRNA_U5-meth_tr"/>
    <property type="match status" value="1"/>
</dbReference>
<dbReference type="SUPFAM" id="SSF50249">
    <property type="entry name" value="Nucleic acid-binding proteins"/>
    <property type="match status" value="1"/>
</dbReference>
<dbReference type="SUPFAM" id="SSF53335">
    <property type="entry name" value="S-adenosyl-L-methionine-dependent methyltransferases"/>
    <property type="match status" value="1"/>
</dbReference>
<dbReference type="PROSITE" id="PS51687">
    <property type="entry name" value="SAM_MT_RNA_M5U"/>
    <property type="match status" value="1"/>
</dbReference>
<dbReference type="PROSITE" id="PS50926">
    <property type="entry name" value="TRAM"/>
    <property type="match status" value="1"/>
</dbReference>
<dbReference type="PROSITE" id="PS01230">
    <property type="entry name" value="TRMA_1"/>
    <property type="match status" value="1"/>
</dbReference>
<dbReference type="PROSITE" id="PS01231">
    <property type="entry name" value="TRMA_2"/>
    <property type="match status" value="1"/>
</dbReference>
<feature type="initiator methionine" description="Removed" evidence="1">
    <location>
        <position position="1"/>
    </location>
</feature>
<feature type="chain" id="PRO_0000229883" description="23S rRNA (uracil(1939)-C(5))-methyltransferase RlmD">
    <location>
        <begin position="2"/>
        <end position="433"/>
    </location>
</feature>
<feature type="domain" description="TRAM" evidence="2">
    <location>
        <begin position="10"/>
        <end position="68"/>
    </location>
</feature>
<feature type="active site" description="Nucleophile" evidence="2">
    <location>
        <position position="389"/>
    </location>
</feature>
<feature type="binding site" evidence="2">
    <location>
        <position position="81"/>
    </location>
    <ligand>
        <name>[4Fe-4S] cluster</name>
        <dbReference type="ChEBI" id="CHEBI:49883"/>
    </ligand>
</feature>
<feature type="binding site" evidence="2">
    <location>
        <position position="87"/>
    </location>
    <ligand>
        <name>[4Fe-4S] cluster</name>
        <dbReference type="ChEBI" id="CHEBI:49883"/>
    </ligand>
</feature>
<feature type="binding site" evidence="2">
    <location>
        <position position="90"/>
    </location>
    <ligand>
        <name>[4Fe-4S] cluster</name>
        <dbReference type="ChEBI" id="CHEBI:49883"/>
    </ligand>
</feature>
<feature type="binding site" evidence="2">
    <location>
        <position position="162"/>
    </location>
    <ligand>
        <name>[4Fe-4S] cluster</name>
        <dbReference type="ChEBI" id="CHEBI:49883"/>
    </ligand>
</feature>
<feature type="binding site" evidence="2">
    <location>
        <position position="265"/>
    </location>
    <ligand>
        <name>S-adenosyl-L-methionine</name>
        <dbReference type="ChEBI" id="CHEBI:59789"/>
    </ligand>
</feature>
<feature type="binding site" evidence="2">
    <location>
        <position position="294"/>
    </location>
    <ligand>
        <name>S-adenosyl-L-methionine</name>
        <dbReference type="ChEBI" id="CHEBI:59789"/>
    </ligand>
</feature>
<feature type="binding site" evidence="2">
    <location>
        <position position="299"/>
    </location>
    <ligand>
        <name>S-adenosyl-L-methionine</name>
        <dbReference type="ChEBI" id="CHEBI:59789"/>
    </ligand>
</feature>
<feature type="binding site" evidence="2">
    <location>
        <position position="315"/>
    </location>
    <ligand>
        <name>S-adenosyl-L-methionine</name>
        <dbReference type="ChEBI" id="CHEBI:59789"/>
    </ligand>
</feature>
<feature type="binding site" evidence="2">
    <location>
        <position position="342"/>
    </location>
    <ligand>
        <name>S-adenosyl-L-methionine</name>
        <dbReference type="ChEBI" id="CHEBI:59789"/>
    </ligand>
</feature>
<feature type="binding site" evidence="2">
    <location>
        <position position="363"/>
    </location>
    <ligand>
        <name>S-adenosyl-L-methionine</name>
        <dbReference type="ChEBI" id="CHEBI:59789"/>
    </ligand>
</feature>
<gene>
    <name evidence="2" type="primary">rlmD</name>
    <name type="synonym">rumA</name>
    <name type="ordered locus">SBO_2666</name>
</gene>
<protein>
    <recommendedName>
        <fullName evidence="2">23S rRNA (uracil(1939)-C(5))-methyltransferase RlmD</fullName>
        <ecNumber evidence="2">2.1.1.190</ecNumber>
    </recommendedName>
    <alternativeName>
        <fullName evidence="2">23S rRNA(m5U1939)-methyltransferase</fullName>
    </alternativeName>
</protein>
<organism>
    <name type="scientific">Shigella boydii serotype 4 (strain Sb227)</name>
    <dbReference type="NCBI Taxonomy" id="300268"/>
    <lineage>
        <taxon>Bacteria</taxon>
        <taxon>Pseudomonadati</taxon>
        <taxon>Pseudomonadota</taxon>
        <taxon>Gammaproteobacteria</taxon>
        <taxon>Enterobacterales</taxon>
        <taxon>Enterobacteriaceae</taxon>
        <taxon>Shigella</taxon>
    </lineage>
</organism>
<accession>Q31XK5</accession>
<evidence type="ECO:0000250" key="1"/>
<evidence type="ECO:0000255" key="2">
    <source>
        <dbReference type="HAMAP-Rule" id="MF_01010"/>
    </source>
</evidence>
<name>RLMD_SHIBS</name>
<proteinExistence type="inferred from homology"/>